<gene>
    <name evidence="1" type="primary">fbp</name>
    <name type="ordered locus">PXO_03469</name>
</gene>
<comment type="catalytic activity">
    <reaction evidence="1">
        <text>beta-D-fructose 1,6-bisphosphate + H2O = beta-D-fructose 6-phosphate + phosphate</text>
        <dbReference type="Rhea" id="RHEA:11064"/>
        <dbReference type="ChEBI" id="CHEBI:15377"/>
        <dbReference type="ChEBI" id="CHEBI:32966"/>
        <dbReference type="ChEBI" id="CHEBI:43474"/>
        <dbReference type="ChEBI" id="CHEBI:57634"/>
        <dbReference type="EC" id="3.1.3.11"/>
    </reaction>
</comment>
<comment type="cofactor">
    <cofactor evidence="1">
        <name>Mg(2+)</name>
        <dbReference type="ChEBI" id="CHEBI:18420"/>
    </cofactor>
    <text evidence="1">Binds 2 magnesium ions per subunit.</text>
</comment>
<comment type="pathway">
    <text evidence="1">Carbohydrate biosynthesis; gluconeogenesis.</text>
</comment>
<comment type="subunit">
    <text evidence="1">Homotetramer.</text>
</comment>
<comment type="subcellular location">
    <subcellularLocation>
        <location evidence="1">Cytoplasm</location>
    </subcellularLocation>
</comment>
<comment type="similarity">
    <text evidence="1">Belongs to the FBPase class 1 family.</text>
</comment>
<name>F16PA_XANOP</name>
<sequence length="336" mass="36610">MSRPSLTRFLIEEQHAGRIDAELRQLITIVSRACKRISIAVSKGALGGVLGDAGTGNVQGEAQKKLDVLSNDILLEANAWGGHLAACASEEMDHSQPVPEQYPSGDFLLLFDPLDGSSNIDVNVSVGTIFSVLRAPKGTEKPGDEHFLQPGTQQVAAGYCIYGPSTMLVLTLGHGTHAFTLEREEGSFLLTQANMRVPDETAEYAINMSNQRHWEPAMQAYVGDLLAGKDGARGKDFNMRWIASMVADVHRILTRGGIFIYPWDKKDPSKPGKLRLMYEANPMSMLVEQAGGAATTGRERILDIQPTQLHQRVPVFLGSKNEVAAATRYHLDADKA</sequence>
<reference key="1">
    <citation type="journal article" date="2008" name="BMC Genomics">
        <title>Genome sequence and rapid evolution of the rice pathogen Xanthomonas oryzae pv. oryzae PXO99A.</title>
        <authorList>
            <person name="Salzberg S.L."/>
            <person name="Sommer D.D."/>
            <person name="Schatz M.C."/>
            <person name="Phillippy A.M."/>
            <person name="Rabinowicz P.D."/>
            <person name="Tsuge S."/>
            <person name="Furutani A."/>
            <person name="Ochiai H."/>
            <person name="Delcher A.L."/>
            <person name="Kelley D."/>
            <person name="Madupu R."/>
            <person name="Puiu D."/>
            <person name="Radune D."/>
            <person name="Shumway M."/>
            <person name="Trapnell C."/>
            <person name="Aparna G."/>
            <person name="Jha G."/>
            <person name="Pandey A."/>
            <person name="Patil P.B."/>
            <person name="Ishihara H."/>
            <person name="Meyer D.F."/>
            <person name="Szurek B."/>
            <person name="Verdier V."/>
            <person name="Koebnik R."/>
            <person name="Dow J.M."/>
            <person name="Ryan R.P."/>
            <person name="Hirata H."/>
            <person name="Tsuyumu S."/>
            <person name="Won Lee S."/>
            <person name="Seo Y.-S."/>
            <person name="Sriariyanum M."/>
            <person name="Ronald P.C."/>
            <person name="Sonti R.V."/>
            <person name="Van Sluys M.-A."/>
            <person name="Leach J.E."/>
            <person name="White F.F."/>
            <person name="Bogdanove A.J."/>
        </authorList>
    </citation>
    <scope>NUCLEOTIDE SEQUENCE [LARGE SCALE GENOMIC DNA]</scope>
    <source>
        <strain>PXO99A</strain>
    </source>
</reference>
<protein>
    <recommendedName>
        <fullName evidence="1">Fructose-1,6-bisphosphatase class 1</fullName>
        <shortName evidence="1">FBPase class 1</shortName>
        <ecNumber evidence="1">3.1.3.11</ecNumber>
    </recommendedName>
    <alternativeName>
        <fullName evidence="1">D-fructose-1,6-bisphosphate 1-phosphohydrolase class 1</fullName>
    </alternativeName>
</protein>
<organism>
    <name type="scientific">Xanthomonas oryzae pv. oryzae (strain PXO99A)</name>
    <dbReference type="NCBI Taxonomy" id="360094"/>
    <lineage>
        <taxon>Bacteria</taxon>
        <taxon>Pseudomonadati</taxon>
        <taxon>Pseudomonadota</taxon>
        <taxon>Gammaproteobacteria</taxon>
        <taxon>Lysobacterales</taxon>
        <taxon>Lysobacteraceae</taxon>
        <taxon>Xanthomonas</taxon>
    </lineage>
</organism>
<feature type="chain" id="PRO_0000364757" description="Fructose-1,6-bisphosphatase class 1">
    <location>
        <begin position="1"/>
        <end position="336"/>
    </location>
</feature>
<feature type="binding site" evidence="1">
    <location>
        <position position="90"/>
    </location>
    <ligand>
        <name>Mg(2+)</name>
        <dbReference type="ChEBI" id="CHEBI:18420"/>
        <label>1</label>
    </ligand>
</feature>
<feature type="binding site" evidence="1">
    <location>
        <position position="112"/>
    </location>
    <ligand>
        <name>Mg(2+)</name>
        <dbReference type="ChEBI" id="CHEBI:18420"/>
        <label>1</label>
    </ligand>
</feature>
<feature type="binding site" evidence="1">
    <location>
        <position position="112"/>
    </location>
    <ligand>
        <name>Mg(2+)</name>
        <dbReference type="ChEBI" id="CHEBI:18420"/>
        <label>2</label>
    </ligand>
</feature>
<feature type="binding site" evidence="1">
    <location>
        <position position="114"/>
    </location>
    <ligand>
        <name>Mg(2+)</name>
        <dbReference type="ChEBI" id="CHEBI:18420"/>
        <label>1</label>
    </ligand>
</feature>
<feature type="binding site" evidence="1">
    <location>
        <begin position="115"/>
        <end position="118"/>
    </location>
    <ligand>
        <name>substrate</name>
    </ligand>
</feature>
<feature type="binding site" evidence="1">
    <location>
        <position position="115"/>
    </location>
    <ligand>
        <name>Mg(2+)</name>
        <dbReference type="ChEBI" id="CHEBI:18420"/>
        <label>2</label>
    </ligand>
</feature>
<feature type="binding site" evidence="1">
    <location>
        <position position="207"/>
    </location>
    <ligand>
        <name>substrate</name>
    </ligand>
</feature>
<feature type="binding site" evidence="1">
    <location>
        <position position="273"/>
    </location>
    <ligand>
        <name>substrate</name>
    </ligand>
</feature>
<feature type="binding site" evidence="1">
    <location>
        <position position="279"/>
    </location>
    <ligand>
        <name>Mg(2+)</name>
        <dbReference type="ChEBI" id="CHEBI:18420"/>
        <label>2</label>
    </ligand>
</feature>
<proteinExistence type="inferred from homology"/>
<dbReference type="EC" id="3.1.3.11" evidence="1"/>
<dbReference type="EMBL" id="CP000967">
    <property type="protein sequence ID" value="ACD56682.1"/>
    <property type="molecule type" value="Genomic_DNA"/>
</dbReference>
<dbReference type="RefSeq" id="WP_011257020.1">
    <property type="nucleotide sequence ID" value="NC_010717.2"/>
</dbReference>
<dbReference type="SMR" id="B2SUX7"/>
<dbReference type="KEGG" id="xop:PXO_03469"/>
<dbReference type="eggNOG" id="COG0158">
    <property type="taxonomic scope" value="Bacteria"/>
</dbReference>
<dbReference type="HOGENOM" id="CLU_039977_0_0_6"/>
<dbReference type="UniPathway" id="UPA00138"/>
<dbReference type="Proteomes" id="UP000001740">
    <property type="component" value="Chromosome"/>
</dbReference>
<dbReference type="GO" id="GO:0005829">
    <property type="term" value="C:cytosol"/>
    <property type="evidence" value="ECO:0007669"/>
    <property type="project" value="TreeGrafter"/>
</dbReference>
<dbReference type="GO" id="GO:0042132">
    <property type="term" value="F:fructose 1,6-bisphosphate 1-phosphatase activity"/>
    <property type="evidence" value="ECO:0007669"/>
    <property type="project" value="UniProtKB-UniRule"/>
</dbReference>
<dbReference type="GO" id="GO:0000287">
    <property type="term" value="F:magnesium ion binding"/>
    <property type="evidence" value="ECO:0007669"/>
    <property type="project" value="UniProtKB-UniRule"/>
</dbReference>
<dbReference type="GO" id="GO:0030388">
    <property type="term" value="P:fructose 1,6-bisphosphate metabolic process"/>
    <property type="evidence" value="ECO:0007669"/>
    <property type="project" value="TreeGrafter"/>
</dbReference>
<dbReference type="GO" id="GO:0006002">
    <property type="term" value="P:fructose 6-phosphate metabolic process"/>
    <property type="evidence" value="ECO:0007669"/>
    <property type="project" value="TreeGrafter"/>
</dbReference>
<dbReference type="GO" id="GO:0006000">
    <property type="term" value="P:fructose metabolic process"/>
    <property type="evidence" value="ECO:0007669"/>
    <property type="project" value="TreeGrafter"/>
</dbReference>
<dbReference type="GO" id="GO:0006094">
    <property type="term" value="P:gluconeogenesis"/>
    <property type="evidence" value="ECO:0007669"/>
    <property type="project" value="UniProtKB-UniRule"/>
</dbReference>
<dbReference type="GO" id="GO:0005986">
    <property type="term" value="P:sucrose biosynthetic process"/>
    <property type="evidence" value="ECO:0007669"/>
    <property type="project" value="TreeGrafter"/>
</dbReference>
<dbReference type="CDD" id="cd00354">
    <property type="entry name" value="FBPase"/>
    <property type="match status" value="1"/>
</dbReference>
<dbReference type="FunFam" id="3.30.540.10:FF:000006">
    <property type="entry name" value="Fructose-1,6-bisphosphatase class 1"/>
    <property type="match status" value="1"/>
</dbReference>
<dbReference type="FunFam" id="3.40.190.80:FF:000011">
    <property type="entry name" value="Fructose-1,6-bisphosphatase class 1"/>
    <property type="match status" value="1"/>
</dbReference>
<dbReference type="Gene3D" id="3.40.190.80">
    <property type="match status" value="1"/>
</dbReference>
<dbReference type="Gene3D" id="3.30.540.10">
    <property type="entry name" value="Fructose-1,6-Bisphosphatase, subunit A, domain 1"/>
    <property type="match status" value="1"/>
</dbReference>
<dbReference type="HAMAP" id="MF_01855">
    <property type="entry name" value="FBPase_class1"/>
    <property type="match status" value="1"/>
</dbReference>
<dbReference type="InterPro" id="IPR044015">
    <property type="entry name" value="FBPase_C_dom"/>
</dbReference>
<dbReference type="InterPro" id="IPR000146">
    <property type="entry name" value="FBPase_class-1"/>
</dbReference>
<dbReference type="InterPro" id="IPR033391">
    <property type="entry name" value="FBPase_N"/>
</dbReference>
<dbReference type="InterPro" id="IPR028343">
    <property type="entry name" value="FBPtase"/>
</dbReference>
<dbReference type="NCBIfam" id="NF006779">
    <property type="entry name" value="PRK09293.1-3"/>
    <property type="match status" value="1"/>
</dbReference>
<dbReference type="NCBIfam" id="NF006780">
    <property type="entry name" value="PRK09293.1-4"/>
    <property type="match status" value="1"/>
</dbReference>
<dbReference type="PANTHER" id="PTHR11556">
    <property type="entry name" value="FRUCTOSE-1,6-BISPHOSPHATASE-RELATED"/>
    <property type="match status" value="1"/>
</dbReference>
<dbReference type="PANTHER" id="PTHR11556:SF35">
    <property type="entry name" value="SEDOHEPTULOSE-1,7-BISPHOSPHATASE, CHLOROPLASTIC"/>
    <property type="match status" value="1"/>
</dbReference>
<dbReference type="Pfam" id="PF00316">
    <property type="entry name" value="FBPase"/>
    <property type="match status" value="1"/>
</dbReference>
<dbReference type="Pfam" id="PF18913">
    <property type="entry name" value="FBPase_C"/>
    <property type="match status" value="1"/>
</dbReference>
<dbReference type="PIRSF" id="PIRSF500210">
    <property type="entry name" value="FBPtase"/>
    <property type="match status" value="1"/>
</dbReference>
<dbReference type="PIRSF" id="PIRSF000904">
    <property type="entry name" value="FBPtase_SBPase"/>
    <property type="match status" value="1"/>
</dbReference>
<dbReference type="PRINTS" id="PR00115">
    <property type="entry name" value="F16BPHPHTASE"/>
</dbReference>
<dbReference type="SUPFAM" id="SSF56655">
    <property type="entry name" value="Carbohydrate phosphatase"/>
    <property type="match status" value="1"/>
</dbReference>
<evidence type="ECO:0000255" key="1">
    <source>
        <dbReference type="HAMAP-Rule" id="MF_01855"/>
    </source>
</evidence>
<accession>B2SUX7</accession>
<keyword id="KW-0119">Carbohydrate metabolism</keyword>
<keyword id="KW-0963">Cytoplasm</keyword>
<keyword id="KW-0378">Hydrolase</keyword>
<keyword id="KW-0460">Magnesium</keyword>
<keyword id="KW-0479">Metal-binding</keyword>